<name>RL22_ACIET</name>
<feature type="chain" id="PRO_1000166059" description="Large ribosomal subunit protein uL22">
    <location>
        <begin position="1"/>
        <end position="110"/>
    </location>
</feature>
<accession>B9MB78</accession>
<gene>
    <name evidence="1" type="primary">rplV</name>
    <name type="ordered locus">Dtpsy_0278</name>
</gene>
<sequence length="110" mass="12029">MSETRAVLRGVRLSVDKGRLVADLIRGKKVDQALNILAFTQKKAAVIVKKVLESAIANAEHNDGADIDDLKVKTIFVEQGTTLKRFTARAKGRGNRISKPTCHIYVTVGN</sequence>
<evidence type="ECO:0000255" key="1">
    <source>
        <dbReference type="HAMAP-Rule" id="MF_01331"/>
    </source>
</evidence>
<evidence type="ECO:0000305" key="2"/>
<reference key="1">
    <citation type="submission" date="2009-01" db="EMBL/GenBank/DDBJ databases">
        <title>Complete sequence of Diaphorobacter sp. TPSY.</title>
        <authorList>
            <consortium name="US DOE Joint Genome Institute"/>
            <person name="Lucas S."/>
            <person name="Copeland A."/>
            <person name="Lapidus A."/>
            <person name="Glavina del Rio T."/>
            <person name="Tice H."/>
            <person name="Bruce D."/>
            <person name="Goodwin L."/>
            <person name="Pitluck S."/>
            <person name="Chertkov O."/>
            <person name="Brettin T."/>
            <person name="Detter J.C."/>
            <person name="Han C."/>
            <person name="Larimer F."/>
            <person name="Land M."/>
            <person name="Hauser L."/>
            <person name="Kyrpides N."/>
            <person name="Mikhailova N."/>
            <person name="Coates J.D."/>
        </authorList>
    </citation>
    <scope>NUCLEOTIDE SEQUENCE [LARGE SCALE GENOMIC DNA]</scope>
    <source>
        <strain>TPSY</strain>
    </source>
</reference>
<comment type="function">
    <text evidence="1">This protein binds specifically to 23S rRNA; its binding is stimulated by other ribosomal proteins, e.g. L4, L17, and L20. It is important during the early stages of 50S assembly. It makes multiple contacts with different domains of the 23S rRNA in the assembled 50S subunit and ribosome (By similarity).</text>
</comment>
<comment type="function">
    <text evidence="1">The globular domain of the protein is located near the polypeptide exit tunnel on the outside of the subunit, while an extended beta-hairpin is found that lines the wall of the exit tunnel in the center of the 70S ribosome.</text>
</comment>
<comment type="subunit">
    <text evidence="1">Part of the 50S ribosomal subunit.</text>
</comment>
<comment type="similarity">
    <text evidence="1">Belongs to the universal ribosomal protein uL22 family.</text>
</comment>
<dbReference type="EMBL" id="CP001392">
    <property type="protein sequence ID" value="ACM31762.1"/>
    <property type="molecule type" value="Genomic_DNA"/>
</dbReference>
<dbReference type="RefSeq" id="WP_011803747.1">
    <property type="nucleotide sequence ID" value="NC_011992.1"/>
</dbReference>
<dbReference type="SMR" id="B9MB78"/>
<dbReference type="GeneID" id="84683207"/>
<dbReference type="KEGG" id="dia:Dtpsy_0278"/>
<dbReference type="eggNOG" id="COG0091">
    <property type="taxonomic scope" value="Bacteria"/>
</dbReference>
<dbReference type="HOGENOM" id="CLU_083987_3_3_4"/>
<dbReference type="Proteomes" id="UP000000450">
    <property type="component" value="Chromosome"/>
</dbReference>
<dbReference type="GO" id="GO:0022625">
    <property type="term" value="C:cytosolic large ribosomal subunit"/>
    <property type="evidence" value="ECO:0007669"/>
    <property type="project" value="TreeGrafter"/>
</dbReference>
<dbReference type="GO" id="GO:0019843">
    <property type="term" value="F:rRNA binding"/>
    <property type="evidence" value="ECO:0007669"/>
    <property type="project" value="UniProtKB-UniRule"/>
</dbReference>
<dbReference type="GO" id="GO:0003735">
    <property type="term" value="F:structural constituent of ribosome"/>
    <property type="evidence" value="ECO:0007669"/>
    <property type="project" value="InterPro"/>
</dbReference>
<dbReference type="GO" id="GO:0006412">
    <property type="term" value="P:translation"/>
    <property type="evidence" value="ECO:0007669"/>
    <property type="project" value="UniProtKB-UniRule"/>
</dbReference>
<dbReference type="CDD" id="cd00336">
    <property type="entry name" value="Ribosomal_L22"/>
    <property type="match status" value="1"/>
</dbReference>
<dbReference type="FunFam" id="3.90.470.10:FF:000001">
    <property type="entry name" value="50S ribosomal protein L22"/>
    <property type="match status" value="1"/>
</dbReference>
<dbReference type="Gene3D" id="3.90.470.10">
    <property type="entry name" value="Ribosomal protein L22/L17"/>
    <property type="match status" value="1"/>
</dbReference>
<dbReference type="HAMAP" id="MF_01331_B">
    <property type="entry name" value="Ribosomal_uL22_B"/>
    <property type="match status" value="1"/>
</dbReference>
<dbReference type="InterPro" id="IPR001063">
    <property type="entry name" value="Ribosomal_uL22"/>
</dbReference>
<dbReference type="InterPro" id="IPR005727">
    <property type="entry name" value="Ribosomal_uL22_bac/chlpt-type"/>
</dbReference>
<dbReference type="InterPro" id="IPR047867">
    <property type="entry name" value="Ribosomal_uL22_bac/org-type"/>
</dbReference>
<dbReference type="InterPro" id="IPR018260">
    <property type="entry name" value="Ribosomal_uL22_CS"/>
</dbReference>
<dbReference type="InterPro" id="IPR036394">
    <property type="entry name" value="Ribosomal_uL22_sf"/>
</dbReference>
<dbReference type="NCBIfam" id="TIGR01044">
    <property type="entry name" value="rplV_bact"/>
    <property type="match status" value="1"/>
</dbReference>
<dbReference type="PANTHER" id="PTHR13501">
    <property type="entry name" value="CHLOROPLAST 50S RIBOSOMAL PROTEIN L22-RELATED"/>
    <property type="match status" value="1"/>
</dbReference>
<dbReference type="PANTHER" id="PTHR13501:SF8">
    <property type="entry name" value="LARGE RIBOSOMAL SUBUNIT PROTEIN UL22M"/>
    <property type="match status" value="1"/>
</dbReference>
<dbReference type="Pfam" id="PF00237">
    <property type="entry name" value="Ribosomal_L22"/>
    <property type="match status" value="1"/>
</dbReference>
<dbReference type="SUPFAM" id="SSF54843">
    <property type="entry name" value="Ribosomal protein L22"/>
    <property type="match status" value="1"/>
</dbReference>
<dbReference type="PROSITE" id="PS00464">
    <property type="entry name" value="RIBOSOMAL_L22"/>
    <property type="match status" value="1"/>
</dbReference>
<protein>
    <recommendedName>
        <fullName evidence="1">Large ribosomal subunit protein uL22</fullName>
    </recommendedName>
    <alternativeName>
        <fullName evidence="2">50S ribosomal protein L22</fullName>
    </alternativeName>
</protein>
<organism>
    <name type="scientific">Acidovorax ebreus (strain TPSY)</name>
    <name type="common">Diaphorobacter sp. (strain TPSY)</name>
    <dbReference type="NCBI Taxonomy" id="535289"/>
    <lineage>
        <taxon>Bacteria</taxon>
        <taxon>Pseudomonadati</taxon>
        <taxon>Pseudomonadota</taxon>
        <taxon>Betaproteobacteria</taxon>
        <taxon>Burkholderiales</taxon>
        <taxon>Comamonadaceae</taxon>
        <taxon>Diaphorobacter</taxon>
    </lineage>
</organism>
<keyword id="KW-1185">Reference proteome</keyword>
<keyword id="KW-0687">Ribonucleoprotein</keyword>
<keyword id="KW-0689">Ribosomal protein</keyword>
<keyword id="KW-0694">RNA-binding</keyword>
<keyword id="KW-0699">rRNA-binding</keyword>
<proteinExistence type="inferred from homology"/>